<protein>
    <recommendedName>
        <fullName evidence="5">Potassium channel toxin alpha-KTx 2.13</fullName>
    </recommendedName>
    <alternativeName>
        <fullName evidence="5">Toxin Css20</fullName>
    </alternativeName>
</protein>
<dbReference type="SMR" id="P85529"/>
<dbReference type="GO" id="GO:0005576">
    <property type="term" value="C:extracellular region"/>
    <property type="evidence" value="ECO:0007669"/>
    <property type="project" value="UniProtKB-SubCell"/>
</dbReference>
<dbReference type="GO" id="GO:0008200">
    <property type="term" value="F:ion channel inhibitor activity"/>
    <property type="evidence" value="ECO:0007669"/>
    <property type="project" value="InterPro"/>
</dbReference>
<dbReference type="GO" id="GO:0015459">
    <property type="term" value="F:potassium channel regulator activity"/>
    <property type="evidence" value="ECO:0007669"/>
    <property type="project" value="UniProtKB-KW"/>
</dbReference>
<dbReference type="GO" id="GO:0090729">
    <property type="term" value="F:toxin activity"/>
    <property type="evidence" value="ECO:0007669"/>
    <property type="project" value="UniProtKB-KW"/>
</dbReference>
<dbReference type="FunFam" id="3.30.30.10:FF:000009">
    <property type="entry name" value="Potassium channel toxin alpha-KTx 4.3"/>
    <property type="match status" value="1"/>
</dbReference>
<dbReference type="Gene3D" id="3.30.30.10">
    <property type="entry name" value="Knottin, scorpion toxin-like"/>
    <property type="match status" value="1"/>
</dbReference>
<dbReference type="InterPro" id="IPR036574">
    <property type="entry name" value="Scorpion_toxin-like_sf"/>
</dbReference>
<dbReference type="InterPro" id="IPR001947">
    <property type="entry name" value="Scorpion_toxinS_K_inh"/>
</dbReference>
<dbReference type="Pfam" id="PF00451">
    <property type="entry name" value="Toxin_2"/>
    <property type="match status" value="1"/>
</dbReference>
<dbReference type="PRINTS" id="PR00286">
    <property type="entry name" value="CHARYBDTOXIN"/>
</dbReference>
<dbReference type="SUPFAM" id="SSF57095">
    <property type="entry name" value="Scorpion toxin-like"/>
    <property type="match status" value="1"/>
</dbReference>
<dbReference type="PROSITE" id="PS01138">
    <property type="entry name" value="SCORP_SHORT_TOXIN"/>
    <property type="match status" value="1"/>
</dbReference>
<name>KAX2D_CENSU</name>
<proteinExistence type="evidence at protein level"/>
<accession>P85529</accession>
<sequence>IFINVKCSSPQQCLKPCKAAFGISAGGKCINGKCKCYP</sequence>
<organism>
    <name type="scientific">Centruroides suffusus</name>
    <name type="common">Durango bark scorpion</name>
    <dbReference type="NCBI Taxonomy" id="6880"/>
    <lineage>
        <taxon>Eukaryota</taxon>
        <taxon>Metazoa</taxon>
        <taxon>Ecdysozoa</taxon>
        <taxon>Arthropoda</taxon>
        <taxon>Chelicerata</taxon>
        <taxon>Arachnida</taxon>
        <taxon>Scorpiones</taxon>
        <taxon>Buthida</taxon>
        <taxon>Buthoidea</taxon>
        <taxon>Buthidae</taxon>
        <taxon>Centruroides</taxon>
    </lineage>
</organism>
<evidence type="ECO:0000250" key="1"/>
<evidence type="ECO:0000250" key="2">
    <source>
        <dbReference type="UniProtKB" id="P40755"/>
    </source>
</evidence>
<evidence type="ECO:0000255" key="3"/>
<evidence type="ECO:0000269" key="4">
    <source>
    </source>
</evidence>
<evidence type="ECO:0000303" key="5">
    <source>
    </source>
</evidence>
<evidence type="ECO:0000305" key="6">
    <source>
    </source>
</evidence>
<feature type="peptide" id="PRO_0000358604" description="Potassium channel toxin alpha-KTx 2.13" evidence="4">
    <location>
        <begin position="1"/>
        <end position="38"/>
    </location>
</feature>
<feature type="site" description="Basic residue of the functional dyad" evidence="1">
    <location>
        <position position="28"/>
    </location>
</feature>
<feature type="site" description="Aromatic residue of the functional dyad" evidence="1">
    <location>
        <position position="37"/>
    </location>
</feature>
<feature type="disulfide bond" evidence="2">
    <location>
        <begin position="7"/>
        <end position="29"/>
    </location>
</feature>
<feature type="disulfide bond" evidence="2">
    <location>
        <begin position="13"/>
        <end position="34"/>
    </location>
</feature>
<feature type="disulfide bond" evidence="2">
    <location>
        <begin position="17"/>
        <end position="36"/>
    </location>
</feature>
<reference key="1">
    <citation type="journal article" date="2008" name="Biochem. Pharmacol.">
        <title>A selective blocker of Kv1.2 and Kv1.3 potassium channels from the venom of the scorpion Centruroides suffusus suffusus.</title>
        <authorList>
            <person name="Corzo G."/>
            <person name="Papp F."/>
            <person name="Varga Z."/>
            <person name="Barraza O."/>
            <person name="Espino-Solis P.G."/>
            <person name="Rodriguez de la Vega R.C."/>
            <person name="Gaspar R."/>
            <person name="Panyi G."/>
            <person name="Possani L.D."/>
        </authorList>
    </citation>
    <scope>PROTEIN SEQUENCE</scope>
    <scope>FUNCTION</scope>
    <scope>MASS SPECTROMETRY</scope>
    <scope>SUBCELLULAR LOCATION</scope>
    <scope>ACTIVITY PROFILE</scope>
    <source>
        <tissue>Venom</tissue>
    </source>
</reference>
<comment type="function">
    <text evidence="4">Selective inhibitor of voltage-gated potassium channels, blocks the Kv1.2/KCNA2 (Kd=1.3 nM) and Kv1.3/KCNA3 (Kd=7.2 nM) channels. Association and dissociation rates of the toxin are slower for Kv1.2/KCNA2 than for Kv1.3/KCNA3.</text>
</comment>
<comment type="subcellular location">
    <subcellularLocation>
        <location evidence="4">Secreted</location>
    </subcellularLocation>
</comment>
<comment type="tissue specificity">
    <text evidence="4">Expressed by the venom gland.</text>
</comment>
<comment type="domain">
    <text evidence="2">Has the structural arrangement of an alpha-helix connected to a beta-sheet by disulfide bonds (CSalpha/beta).</text>
</comment>
<comment type="mass spectrometry"/>
<comment type="miscellaneous">
    <text evidence="6">Negative results: does not inhibit the potassium channels Kv1.1/KCNA1, Kv1.4/KCNA4, Kv1.5/KCNA5, Kv2.1/KCNB1, Kv11.1/KCNH2, KCa3.1/KCNN4, KCa1.1/KCNMA1 and the sodium channel Nav1.5/SCN5A.</text>
</comment>
<comment type="similarity">
    <text evidence="3">Belongs to the short scorpion toxin superfamily. Potassium channel inhibitor family. Alpha-KTx 02 subfamily.</text>
</comment>
<keyword id="KW-0903">Direct protein sequencing</keyword>
<keyword id="KW-1015">Disulfide bond</keyword>
<keyword id="KW-0872">Ion channel impairing toxin</keyword>
<keyword id="KW-0528">Neurotoxin</keyword>
<keyword id="KW-0632">Potassium channel impairing toxin</keyword>
<keyword id="KW-0964">Secreted</keyword>
<keyword id="KW-0800">Toxin</keyword>
<keyword id="KW-1220">Voltage-gated potassium channel impairing toxin</keyword>